<sequence>MMKFQDFSSGLYVAAKFSDSTLDEIENLQRELKVPNPVPRHKIHSTICYSRVNVPYVVSTGSFEVANSGELQVWDTQDGRTLVLVLDSDYLKFRHNYARALGATHDFDDYSPHITLSYNVGPAQFSGIVQVPVILDREYKEPLKINWTEDLK</sequence>
<feature type="chain" id="PRO_0000456661" description="Anti-CBASS protein Acb1">
    <location>
        <begin position="1"/>
        <end position="152"/>
    </location>
</feature>
<feature type="active site" evidence="1">
    <location>
        <position position="44"/>
    </location>
</feature>
<feature type="active site" evidence="1">
    <location>
        <position position="46"/>
    </location>
</feature>
<feature type="active site" evidence="1">
    <location>
        <position position="113"/>
    </location>
</feature>
<feature type="active site" evidence="1">
    <location>
        <position position="115"/>
    </location>
</feature>
<feature type="binding site" evidence="1">
    <location>
        <position position="12"/>
    </location>
    <ligand>
        <name>3',3'-cGAMP</name>
        <dbReference type="ChEBI" id="CHEBI:71501"/>
    </ligand>
</feature>
<feature type="binding site" evidence="1">
    <location>
        <position position="12"/>
    </location>
    <ligand>
        <name>3',3'-cUAMP</name>
        <dbReference type="ChEBI" id="CHEBI:143809"/>
    </ligand>
</feature>
<feature type="binding site" description="specific to adenosine" evidence="1">
    <location>
        <position position="141"/>
    </location>
    <ligand>
        <name>3',3'-cGAMP</name>
        <dbReference type="ChEBI" id="CHEBI:71501"/>
    </ligand>
</feature>
<feature type="binding site" description="specific to adenosine" evidence="1">
    <location>
        <position position="141"/>
    </location>
    <ligand>
        <name>3',3'-cUAMP</name>
        <dbReference type="ChEBI" id="CHEBI:143809"/>
    </ligand>
</feature>
<feature type="binding site" evidence="1">
    <location>
        <position position="147"/>
    </location>
    <ligand>
        <name>3',3'-cGAMP</name>
        <dbReference type="ChEBI" id="CHEBI:71501"/>
    </ligand>
</feature>
<feature type="binding site" evidence="1">
    <location>
        <position position="147"/>
    </location>
    <ligand>
        <name>3',3'-cUAMP</name>
        <dbReference type="ChEBI" id="CHEBI:143809"/>
    </ligand>
</feature>
<accession>M1EAP5</accession>
<dbReference type="EMBL" id="HQ331142">
    <property type="protein sequence ID" value="AEO97082.1"/>
    <property type="molecule type" value="Genomic_DNA"/>
</dbReference>
<dbReference type="RefSeq" id="YP_007501173.1">
    <property type="nucleotide sequence ID" value="NC_020416.1"/>
</dbReference>
<dbReference type="SMR" id="M1EAP5"/>
<dbReference type="GeneID" id="14675374"/>
<dbReference type="KEGG" id="vg:14675374"/>
<dbReference type="OrthoDB" id="11210at10239"/>
<dbReference type="Proteomes" id="UP000011284">
    <property type="component" value="Genome"/>
</dbReference>
<dbReference type="GO" id="GO:0016787">
    <property type="term" value="F:hydrolase activity"/>
    <property type="evidence" value="ECO:0007669"/>
    <property type="project" value="UniProtKB-KW"/>
</dbReference>
<dbReference type="GO" id="GO:0052170">
    <property type="term" value="P:symbiont-mediated suppression of host innate immune response"/>
    <property type="evidence" value="ECO:0007669"/>
    <property type="project" value="UniProtKB-KW"/>
</dbReference>
<dbReference type="InterPro" id="IPR056175">
    <property type="entry name" value="Acb1-like_C"/>
</dbReference>
<dbReference type="Pfam" id="PF23474">
    <property type="entry name" value="Acb1"/>
    <property type="match status" value="1"/>
</dbReference>
<name>ACB1_BPS16</name>
<organism>
    <name type="scientific">Salmonella phage S16</name>
    <name type="common">Salmonella phage vB_SenM-S16</name>
    <dbReference type="NCBI Taxonomy" id="1087482"/>
    <lineage>
        <taxon>Viruses</taxon>
        <taxon>Duplodnaviria</taxon>
        <taxon>Heunggongvirae</taxon>
        <taxon>Uroviricota</taxon>
        <taxon>Caudoviricetes</taxon>
        <taxon>Straboviridae</taxon>
        <taxon>Tevenvirinae</taxon>
        <taxon>Gelderlandvirus</taxon>
        <taxon>Gelderlandvirus s16</taxon>
    </lineage>
</organism>
<protein>
    <recommendedName>
        <fullName evidence="4">Anti-CBASS protein Acb1</fullName>
        <shortName evidence="4">Acb1</shortName>
    </recommendedName>
</protein>
<evidence type="ECO:0000250" key="1">
    <source>
        <dbReference type="UniProtKB" id="A0A868BQY3"/>
    </source>
</evidence>
<evidence type="ECO:0000250" key="2">
    <source>
        <dbReference type="UniProtKB" id="P04533"/>
    </source>
</evidence>
<evidence type="ECO:0000269" key="3">
    <source>
    </source>
</evidence>
<evidence type="ECO:0000303" key="4">
    <source>
    </source>
</evidence>
<evidence type="ECO:0000305" key="5"/>
<comment type="function">
    <text evidence="2 3">Counteracts the host CBASS antiviral defense system. Phosphodiesterase that enables metal-independent hydrolysis of the host cyclic di- and trinucleotide CBASS signals such as 3'3'-cGAMP, 3'3'cUA, and 3'3'3'-cAAA (PubMed:35395152). Does not cleave cGG or cA4 (By similarity). Besides evasion of the CBASS system, might also enable evasion of the type III CRISPR systems that use cA3 signals (By similarity).</text>
</comment>
<comment type="catalytic activity">
    <reaction evidence="3">
        <text>3',3'-cUAMP + H2O = U[3'-5']pAp[3'] + H(+)</text>
        <dbReference type="Rhea" id="RHEA:72835"/>
        <dbReference type="ChEBI" id="CHEBI:15377"/>
        <dbReference type="ChEBI" id="CHEBI:15378"/>
        <dbReference type="ChEBI" id="CHEBI:143809"/>
        <dbReference type="ChEBI" id="CHEBI:192498"/>
    </reaction>
    <physiologicalReaction direction="left-to-right" evidence="3">
        <dbReference type="Rhea" id="RHEA:72836"/>
    </physiologicalReaction>
</comment>
<comment type="catalytic activity">
    <reaction evidence="3">
        <text>3',3',3'-c-tri-AMP + H2O = A[3'-5']pA[3'-5']pAp[3'] + H(+)</text>
        <dbReference type="Rhea" id="RHEA:72859"/>
        <dbReference type="ChEBI" id="CHEBI:15377"/>
        <dbReference type="ChEBI" id="CHEBI:15378"/>
        <dbReference type="ChEBI" id="CHEBI:192523"/>
        <dbReference type="ChEBI" id="CHEBI:192530"/>
    </reaction>
    <physiologicalReaction direction="left-to-right" evidence="3">
        <dbReference type="Rhea" id="RHEA:72860"/>
    </physiologicalReaction>
</comment>
<comment type="catalytic activity">
    <reaction evidence="3">
        <text>3',3',3'-cAAG + H2O = G[3'-5']pA[3'-5']pAp[3'] + H(+)</text>
        <dbReference type="Rhea" id="RHEA:72863"/>
        <dbReference type="ChEBI" id="CHEBI:15377"/>
        <dbReference type="ChEBI" id="CHEBI:15378"/>
        <dbReference type="ChEBI" id="CHEBI:143810"/>
        <dbReference type="ChEBI" id="CHEBI:192532"/>
    </reaction>
    <physiologicalReaction direction="left-to-right" evidence="3">
        <dbReference type="Rhea" id="RHEA:72864"/>
    </physiologicalReaction>
</comment>
<comment type="catalytic activity">
    <reaction evidence="3">
        <text>3',3',3'-cAAG + H2O = A[3'-5']pG[3'-5']pAp[3'] + H(+)</text>
        <dbReference type="Rhea" id="RHEA:72867"/>
        <dbReference type="ChEBI" id="CHEBI:15377"/>
        <dbReference type="ChEBI" id="CHEBI:15378"/>
        <dbReference type="ChEBI" id="CHEBI:143810"/>
        <dbReference type="ChEBI" id="CHEBI:192533"/>
    </reaction>
    <physiologicalReaction direction="left-to-right" evidence="3">
        <dbReference type="Rhea" id="RHEA:72868"/>
    </physiologicalReaction>
</comment>
<comment type="catalytic activity">
    <reaction evidence="3">
        <text>3',3'-cGAMP + H2O = G[3'-5']pAp[3'] + H(+)</text>
        <dbReference type="Rhea" id="RHEA:72831"/>
        <dbReference type="ChEBI" id="CHEBI:15377"/>
        <dbReference type="ChEBI" id="CHEBI:15378"/>
        <dbReference type="ChEBI" id="CHEBI:71501"/>
        <dbReference type="ChEBI" id="CHEBI:192497"/>
    </reaction>
    <physiologicalReaction direction="left-to-right" evidence="3">
        <dbReference type="Rhea" id="RHEA:72832"/>
    </physiologicalReaction>
</comment>
<comment type="similarity">
    <text evidence="5">Belongs to the anti-CBASS protein Acb1 family.</text>
</comment>
<proteinExistence type="evidence at protein level"/>
<organismHost>
    <name type="scientific">Salmonella enterica</name>
    <name type="common">Salmonella choleraesuis</name>
    <dbReference type="NCBI Taxonomy" id="28901"/>
</organismHost>
<reference key="1">
    <citation type="journal article" date="2013" name="Mol. Microbiol.">
        <title>Long tail fibres of the novel broad-host-range T-even bacteriophage S16 specifically recognize Salmonella OmpC.</title>
        <authorList>
            <person name="Marti R."/>
            <person name="Zurfluh K."/>
            <person name="Hagens S."/>
            <person name="Pianezzi J."/>
            <person name="Klumpp J."/>
            <person name="Loessner M.J."/>
        </authorList>
    </citation>
    <scope>NUCLEOTIDE SEQUENCE [LARGE SCALE GENOMIC DNA]</scope>
</reference>
<reference key="2">
    <citation type="journal article" date="2022" name="Nature">
        <title>Phage anti-CBASS and anti-Pycsar nucleases subvert bacterial immunity.</title>
        <authorList>
            <person name="Hobbs S.J."/>
            <person name="Wein T."/>
            <person name="Lu A."/>
            <person name="Morehouse B.R."/>
            <person name="Schnabel J."/>
            <person name="Leavitt A."/>
            <person name="Yirmiya E."/>
            <person name="Sorek R."/>
            <person name="Kranzusch P.J."/>
        </authorList>
    </citation>
    <scope>FUNCTION</scope>
    <scope>CATALYTIC ACTIVITY</scope>
</reference>
<keyword id="KW-0945">Host-virus interaction</keyword>
<keyword id="KW-0378">Hydrolase</keyword>
<keyword id="KW-1090">Inhibition of host innate immune response by virus</keyword>
<keyword id="KW-1185">Reference proteome</keyword>
<keyword id="KW-0899">Viral immunoevasion</keyword>